<feature type="chain" id="PRO_0000428237" description="Ribonucleoside-diphosphate reductase subunit beta nrdF1">
    <location>
        <begin position="1"/>
        <end position="322"/>
    </location>
</feature>
<feature type="active site" evidence="2">
    <location>
        <position position="108"/>
    </location>
</feature>
<feature type="binding site" evidence="2">
    <location>
        <position position="70"/>
    </location>
    <ligand>
        <name>Fe cation</name>
        <dbReference type="ChEBI" id="CHEBI:24875"/>
        <label>1</label>
    </ligand>
</feature>
<feature type="binding site" evidence="2">
    <location>
        <position position="101"/>
    </location>
    <ligand>
        <name>Fe cation</name>
        <dbReference type="ChEBI" id="CHEBI:24875"/>
        <label>1</label>
    </ligand>
</feature>
<feature type="binding site" evidence="1">
    <location>
        <position position="101"/>
    </location>
    <ligand>
        <name>Fe cation</name>
        <dbReference type="ChEBI" id="CHEBI:24875"/>
        <label>2</label>
    </ligand>
</feature>
<feature type="binding site" evidence="2">
    <location>
        <position position="104"/>
    </location>
    <ligand>
        <name>Fe cation</name>
        <dbReference type="ChEBI" id="CHEBI:24875"/>
        <label>1</label>
    </ligand>
</feature>
<feature type="binding site" evidence="1">
    <location>
        <position position="161"/>
    </location>
    <ligand>
        <name>Fe cation</name>
        <dbReference type="ChEBI" id="CHEBI:24875"/>
        <label>2</label>
    </ligand>
</feature>
<feature type="binding site" evidence="1">
    <location>
        <position position="195"/>
    </location>
    <ligand>
        <name>Fe cation</name>
        <dbReference type="ChEBI" id="CHEBI:24875"/>
        <label>2</label>
    </ligand>
</feature>
<feature type="binding site" evidence="1">
    <location>
        <position position="198"/>
    </location>
    <ligand>
        <name>Fe cation</name>
        <dbReference type="ChEBI" id="CHEBI:24875"/>
        <label>2</label>
    </ligand>
</feature>
<sequence>MTGKLVERVHAINWNRLLDAKDLQVWERLTGNFWLPEKIPLSNDLASWQTLSSTEQQTTIRVFTGLTLLDTAQATVGAVAMIDDAVTPHEEAVLTNMAFMESVHAKSYSSIFSTLCSTKQIDDAFDWSEQNPYLQRKAQIIVDYYRGDDALKRKASSVMLESFLFYSGFYLPMYWSSRGKLTNTADLIRLIIRDEAVHGYYIGYKCQRGLADLTDAERADHREYTCELLHTLYANEIDYAHDLYDELGWTDDVLPYMRYNANKALANLGYQPAFDRDTCQVNPAVRAALDPGAGENHDFFSGSGSSYVMGTHQPTTDTDWDF</sequence>
<dbReference type="EC" id="1.17.4.1"/>
<dbReference type="EMBL" id="AE000516">
    <property type="protein sequence ID" value="AAK46308.1"/>
    <property type="molecule type" value="Genomic_DNA"/>
</dbReference>
<dbReference type="PIR" id="C70756">
    <property type="entry name" value="C70756"/>
</dbReference>
<dbReference type="SMR" id="P9WH72"/>
<dbReference type="KEGG" id="mtc:MT2033"/>
<dbReference type="PATRIC" id="fig|83331.31.peg.2188"/>
<dbReference type="HOGENOM" id="CLU_052495_0_0_11"/>
<dbReference type="Proteomes" id="UP000001020">
    <property type="component" value="Chromosome"/>
</dbReference>
<dbReference type="GO" id="GO:0005971">
    <property type="term" value="C:ribonucleoside-diphosphate reductase complex"/>
    <property type="evidence" value="ECO:0007669"/>
    <property type="project" value="InterPro"/>
</dbReference>
<dbReference type="GO" id="GO:0046872">
    <property type="term" value="F:metal ion binding"/>
    <property type="evidence" value="ECO:0007669"/>
    <property type="project" value="UniProtKB-KW"/>
</dbReference>
<dbReference type="GO" id="GO:0004748">
    <property type="term" value="F:ribonucleoside-diphosphate reductase activity, thioredoxin disulfide as acceptor"/>
    <property type="evidence" value="ECO:0007669"/>
    <property type="project" value="UniProtKB-EC"/>
</dbReference>
<dbReference type="GO" id="GO:0009263">
    <property type="term" value="P:deoxyribonucleotide biosynthetic process"/>
    <property type="evidence" value="ECO:0007669"/>
    <property type="project" value="UniProtKB-KW"/>
</dbReference>
<dbReference type="CDD" id="cd01049">
    <property type="entry name" value="RNRR2"/>
    <property type="match status" value="1"/>
</dbReference>
<dbReference type="Gene3D" id="1.10.620.20">
    <property type="entry name" value="Ribonucleotide Reductase, subunit A"/>
    <property type="match status" value="1"/>
</dbReference>
<dbReference type="InterPro" id="IPR009078">
    <property type="entry name" value="Ferritin-like_SF"/>
</dbReference>
<dbReference type="InterPro" id="IPR012348">
    <property type="entry name" value="RNR-like"/>
</dbReference>
<dbReference type="InterPro" id="IPR026494">
    <property type="entry name" value="RNR_NrdF-like"/>
</dbReference>
<dbReference type="InterPro" id="IPR033909">
    <property type="entry name" value="RNR_small"/>
</dbReference>
<dbReference type="InterPro" id="IPR030475">
    <property type="entry name" value="RNR_small_AS"/>
</dbReference>
<dbReference type="InterPro" id="IPR000358">
    <property type="entry name" value="RNR_small_fam"/>
</dbReference>
<dbReference type="NCBIfam" id="NF007182">
    <property type="entry name" value="PRK09614.1-1"/>
    <property type="match status" value="1"/>
</dbReference>
<dbReference type="NCBIfam" id="NF007183">
    <property type="entry name" value="PRK09614.1-2"/>
    <property type="match status" value="1"/>
</dbReference>
<dbReference type="NCBIfam" id="NF010572">
    <property type="entry name" value="PRK13965.1"/>
    <property type="match status" value="1"/>
</dbReference>
<dbReference type="NCBIfam" id="NF010574">
    <property type="entry name" value="PRK13967.1"/>
    <property type="match status" value="1"/>
</dbReference>
<dbReference type="NCBIfam" id="TIGR04171">
    <property type="entry name" value="RNR_1b_NrdF"/>
    <property type="match status" value="1"/>
</dbReference>
<dbReference type="PANTHER" id="PTHR23409">
    <property type="entry name" value="RIBONUCLEOSIDE-DIPHOSPHATE REDUCTASE SMALL CHAIN"/>
    <property type="match status" value="1"/>
</dbReference>
<dbReference type="PANTHER" id="PTHR23409:SF18">
    <property type="entry name" value="RIBONUCLEOSIDE-DIPHOSPHATE REDUCTASE SUBUNIT M2"/>
    <property type="match status" value="1"/>
</dbReference>
<dbReference type="Pfam" id="PF00268">
    <property type="entry name" value="Ribonuc_red_sm"/>
    <property type="match status" value="1"/>
</dbReference>
<dbReference type="PIRSF" id="PIRSF000355">
    <property type="entry name" value="NrdB"/>
    <property type="match status" value="1"/>
</dbReference>
<dbReference type="SUPFAM" id="SSF47240">
    <property type="entry name" value="Ferritin-like"/>
    <property type="match status" value="1"/>
</dbReference>
<dbReference type="PROSITE" id="PS00368">
    <property type="entry name" value="RIBORED_SMALL"/>
    <property type="match status" value="1"/>
</dbReference>
<comment type="function">
    <text evidence="1">Provides the precursors necessary for DNA synthesis. Catalyzes the biosynthesis of deoxyribonucleotides from the corresponding ribonucleotides (By similarity).</text>
</comment>
<comment type="catalytic activity">
    <reaction evidence="2">
        <text>a 2'-deoxyribonucleoside 5'-diphosphate + [thioredoxin]-disulfide + H2O = a ribonucleoside 5'-diphosphate + [thioredoxin]-dithiol</text>
        <dbReference type="Rhea" id="RHEA:23252"/>
        <dbReference type="Rhea" id="RHEA-COMP:10698"/>
        <dbReference type="Rhea" id="RHEA-COMP:10700"/>
        <dbReference type="ChEBI" id="CHEBI:15377"/>
        <dbReference type="ChEBI" id="CHEBI:29950"/>
        <dbReference type="ChEBI" id="CHEBI:50058"/>
        <dbReference type="ChEBI" id="CHEBI:57930"/>
        <dbReference type="ChEBI" id="CHEBI:73316"/>
        <dbReference type="EC" id="1.17.4.1"/>
    </reaction>
</comment>
<comment type="cofactor">
    <cofactor evidence="1">
        <name>Fe cation</name>
        <dbReference type="ChEBI" id="CHEBI:24875"/>
    </cofactor>
    <text evidence="1">Binds 2 iron ions per subunit.</text>
</comment>
<comment type="subunit">
    <text evidence="1">Tetramer of two alpha and two beta subunits.</text>
</comment>
<comment type="similarity">
    <text evidence="3">Belongs to the ribonucleoside diphosphate reductase small chain family.</text>
</comment>
<organism>
    <name type="scientific">Mycobacterium tuberculosis (strain CDC 1551 / Oshkosh)</name>
    <dbReference type="NCBI Taxonomy" id="83331"/>
    <lineage>
        <taxon>Bacteria</taxon>
        <taxon>Bacillati</taxon>
        <taxon>Actinomycetota</taxon>
        <taxon>Actinomycetes</taxon>
        <taxon>Mycobacteriales</taxon>
        <taxon>Mycobacteriaceae</taxon>
        <taxon>Mycobacterium</taxon>
        <taxon>Mycobacterium tuberculosis complex</taxon>
    </lineage>
</organism>
<proteinExistence type="inferred from homology"/>
<reference key="1">
    <citation type="journal article" date="2002" name="J. Bacteriol.">
        <title>Whole-genome comparison of Mycobacterium tuberculosis clinical and laboratory strains.</title>
        <authorList>
            <person name="Fleischmann R.D."/>
            <person name="Alland D."/>
            <person name="Eisen J.A."/>
            <person name="Carpenter L."/>
            <person name="White O."/>
            <person name="Peterson J.D."/>
            <person name="DeBoy R.T."/>
            <person name="Dodson R.J."/>
            <person name="Gwinn M.L."/>
            <person name="Haft D.H."/>
            <person name="Hickey E.K."/>
            <person name="Kolonay J.F."/>
            <person name="Nelson W.C."/>
            <person name="Umayam L.A."/>
            <person name="Ermolaeva M.D."/>
            <person name="Salzberg S.L."/>
            <person name="Delcher A."/>
            <person name="Utterback T.R."/>
            <person name="Weidman J.F."/>
            <person name="Khouri H.M."/>
            <person name="Gill J."/>
            <person name="Mikula A."/>
            <person name="Bishai W."/>
            <person name="Jacobs W.R. Jr."/>
            <person name="Venter J.C."/>
            <person name="Fraser C.M."/>
        </authorList>
    </citation>
    <scope>NUCLEOTIDE SEQUENCE [LARGE SCALE GENOMIC DNA]</scope>
    <source>
        <strain>CDC 1551 / Oshkosh</strain>
    </source>
</reference>
<evidence type="ECO:0000250" key="1"/>
<evidence type="ECO:0000255" key="2">
    <source>
        <dbReference type="PROSITE-ProRule" id="PRU10014"/>
    </source>
</evidence>
<evidence type="ECO:0000305" key="3"/>
<keyword id="KW-0215">Deoxyribonucleotide synthesis</keyword>
<keyword id="KW-0408">Iron</keyword>
<keyword id="KW-0479">Metal-binding</keyword>
<keyword id="KW-0560">Oxidoreductase</keyword>
<keyword id="KW-1185">Reference proteome</keyword>
<gene>
    <name type="primary">nrdF1</name>
    <name type="ordered locus">MT2033</name>
</gene>
<protein>
    <recommendedName>
        <fullName>Ribonucleoside-diphosphate reductase subunit beta nrdF1</fullName>
        <ecNumber>1.17.4.1</ecNumber>
    </recommendedName>
    <alternativeName>
        <fullName>Ribonucleotide reductase R2-1 small subunit</fullName>
    </alternativeName>
    <alternativeName>
        <fullName>Ribonucleotide reductase small subunit 1</fullName>
    </alternativeName>
</protein>
<accession>P9WH72</accession>
<accession>L0TAZ9</accession>
<accession>Q10840</accession>
<accession>Q50548</accession>
<name>RIR2A_MYCTO</name>